<proteinExistence type="inferred from homology"/>
<gene>
    <name type="ORF">SPAC3H1.06c</name>
</gene>
<organism>
    <name type="scientific">Schizosaccharomyces pombe (strain 972 / ATCC 24843)</name>
    <name type="common">Fission yeast</name>
    <dbReference type="NCBI Taxonomy" id="284812"/>
    <lineage>
        <taxon>Eukaryota</taxon>
        <taxon>Fungi</taxon>
        <taxon>Dikarya</taxon>
        <taxon>Ascomycota</taxon>
        <taxon>Taphrinomycotina</taxon>
        <taxon>Schizosaccharomycetes</taxon>
        <taxon>Schizosaccharomycetales</taxon>
        <taxon>Schizosaccharomycetaceae</taxon>
        <taxon>Schizosaccharomyces</taxon>
    </lineage>
</organism>
<protein>
    <recommendedName>
        <fullName>Uncharacterized transporter C3H1.06c</fullName>
    </recommendedName>
</protein>
<dbReference type="EMBL" id="CU329670">
    <property type="protein sequence ID" value="CAA92259.1"/>
    <property type="molecule type" value="Genomic_DNA"/>
</dbReference>
<dbReference type="PIR" id="T38738">
    <property type="entry name" value="T38738"/>
</dbReference>
<dbReference type="RefSeq" id="NP_593548.1">
    <property type="nucleotide sequence ID" value="NM_001018981.2"/>
</dbReference>
<dbReference type="SMR" id="Q10072"/>
<dbReference type="BioGRID" id="279798">
    <property type="interactions" value="11"/>
</dbReference>
<dbReference type="FunCoup" id="Q10072">
    <property type="interactions" value="33"/>
</dbReference>
<dbReference type="iPTMnet" id="Q10072"/>
<dbReference type="SwissPalm" id="Q10072"/>
<dbReference type="PaxDb" id="4896-SPAC3H1.06c.1"/>
<dbReference type="EnsemblFungi" id="SPAC3H1.06c.1">
    <property type="protein sequence ID" value="SPAC3H1.06c.1:pep"/>
    <property type="gene ID" value="SPAC3H1.06c"/>
</dbReference>
<dbReference type="KEGG" id="spo:2543376"/>
<dbReference type="PomBase" id="SPAC3H1.06c"/>
<dbReference type="VEuPathDB" id="FungiDB:SPAC3H1.06c"/>
<dbReference type="eggNOG" id="KOG0254">
    <property type="taxonomic scope" value="Eukaryota"/>
</dbReference>
<dbReference type="HOGENOM" id="CLU_000960_22_0_1"/>
<dbReference type="InParanoid" id="Q10072"/>
<dbReference type="OMA" id="GCTMMPL"/>
<dbReference type="PhylomeDB" id="Q10072"/>
<dbReference type="PRO" id="PR:Q10072"/>
<dbReference type="Proteomes" id="UP000002485">
    <property type="component" value="Chromosome I"/>
</dbReference>
<dbReference type="GO" id="GO:0005783">
    <property type="term" value="C:endoplasmic reticulum"/>
    <property type="evidence" value="ECO:0007005"/>
    <property type="project" value="PomBase"/>
</dbReference>
<dbReference type="GO" id="GO:0005886">
    <property type="term" value="C:plasma membrane"/>
    <property type="evidence" value="ECO:0000318"/>
    <property type="project" value="GO_Central"/>
</dbReference>
<dbReference type="GO" id="GO:0022857">
    <property type="term" value="F:transmembrane transporter activity"/>
    <property type="evidence" value="ECO:0000318"/>
    <property type="project" value="GO_Central"/>
</dbReference>
<dbReference type="GO" id="GO:1990822">
    <property type="term" value="P:basic amino acid transmembrane transport"/>
    <property type="evidence" value="ECO:0000266"/>
    <property type="project" value="PomBase"/>
</dbReference>
<dbReference type="GO" id="GO:0055085">
    <property type="term" value="P:transmembrane transport"/>
    <property type="evidence" value="ECO:0000318"/>
    <property type="project" value="GO_Central"/>
</dbReference>
<dbReference type="CDD" id="cd17502">
    <property type="entry name" value="MFS_Azr1_MDR_like"/>
    <property type="match status" value="1"/>
</dbReference>
<dbReference type="FunFam" id="1.20.1250.20:FF:000373">
    <property type="entry name" value="Vacuolar basic amino acid transporter"/>
    <property type="match status" value="1"/>
</dbReference>
<dbReference type="Gene3D" id="1.20.1250.20">
    <property type="entry name" value="MFS general substrate transporter like domains"/>
    <property type="match status" value="2"/>
</dbReference>
<dbReference type="InterPro" id="IPR011701">
    <property type="entry name" value="MFS"/>
</dbReference>
<dbReference type="InterPro" id="IPR020846">
    <property type="entry name" value="MFS_dom"/>
</dbReference>
<dbReference type="InterPro" id="IPR036259">
    <property type="entry name" value="MFS_trans_sf"/>
</dbReference>
<dbReference type="PANTHER" id="PTHR23501:SF102">
    <property type="entry name" value="DRUG TRANSPORTER, PUTATIVE (AFU_ORTHOLOGUE AFUA_3G08530)-RELATED"/>
    <property type="match status" value="1"/>
</dbReference>
<dbReference type="PANTHER" id="PTHR23501">
    <property type="entry name" value="MAJOR FACILITATOR SUPERFAMILY"/>
    <property type="match status" value="1"/>
</dbReference>
<dbReference type="Pfam" id="PF07690">
    <property type="entry name" value="MFS_1"/>
    <property type="match status" value="1"/>
</dbReference>
<dbReference type="PRINTS" id="PR01036">
    <property type="entry name" value="TCRTETB"/>
</dbReference>
<dbReference type="SUPFAM" id="SSF103473">
    <property type="entry name" value="MFS general substrate transporter"/>
    <property type="match status" value="1"/>
</dbReference>
<dbReference type="PROSITE" id="PS50850">
    <property type="entry name" value="MFS"/>
    <property type="match status" value="1"/>
</dbReference>
<reference key="1">
    <citation type="journal article" date="2002" name="Nature">
        <title>The genome sequence of Schizosaccharomyces pombe.</title>
        <authorList>
            <person name="Wood V."/>
            <person name="Gwilliam R."/>
            <person name="Rajandream M.A."/>
            <person name="Lyne M.H."/>
            <person name="Lyne R."/>
            <person name="Stewart A."/>
            <person name="Sgouros J.G."/>
            <person name="Peat N."/>
            <person name="Hayles J."/>
            <person name="Baker S.G."/>
            <person name="Basham D."/>
            <person name="Bowman S."/>
            <person name="Brooks K."/>
            <person name="Brown D."/>
            <person name="Brown S."/>
            <person name="Chillingworth T."/>
            <person name="Churcher C.M."/>
            <person name="Collins M."/>
            <person name="Connor R."/>
            <person name="Cronin A."/>
            <person name="Davis P."/>
            <person name="Feltwell T."/>
            <person name="Fraser A."/>
            <person name="Gentles S."/>
            <person name="Goble A."/>
            <person name="Hamlin N."/>
            <person name="Harris D.E."/>
            <person name="Hidalgo J."/>
            <person name="Hodgson G."/>
            <person name="Holroyd S."/>
            <person name="Hornsby T."/>
            <person name="Howarth S."/>
            <person name="Huckle E.J."/>
            <person name="Hunt S."/>
            <person name="Jagels K."/>
            <person name="James K.D."/>
            <person name="Jones L."/>
            <person name="Jones M."/>
            <person name="Leather S."/>
            <person name="McDonald S."/>
            <person name="McLean J."/>
            <person name="Mooney P."/>
            <person name="Moule S."/>
            <person name="Mungall K.L."/>
            <person name="Murphy L.D."/>
            <person name="Niblett D."/>
            <person name="Odell C."/>
            <person name="Oliver K."/>
            <person name="O'Neil S."/>
            <person name="Pearson D."/>
            <person name="Quail M.A."/>
            <person name="Rabbinowitsch E."/>
            <person name="Rutherford K.M."/>
            <person name="Rutter S."/>
            <person name="Saunders D."/>
            <person name="Seeger K."/>
            <person name="Sharp S."/>
            <person name="Skelton J."/>
            <person name="Simmonds M.N."/>
            <person name="Squares R."/>
            <person name="Squares S."/>
            <person name="Stevens K."/>
            <person name="Taylor K."/>
            <person name="Taylor R.G."/>
            <person name="Tivey A."/>
            <person name="Walsh S.V."/>
            <person name="Warren T."/>
            <person name="Whitehead S."/>
            <person name="Woodward J.R."/>
            <person name="Volckaert G."/>
            <person name="Aert R."/>
            <person name="Robben J."/>
            <person name="Grymonprez B."/>
            <person name="Weltjens I."/>
            <person name="Vanstreels E."/>
            <person name="Rieger M."/>
            <person name="Schaefer M."/>
            <person name="Mueller-Auer S."/>
            <person name="Gabel C."/>
            <person name="Fuchs M."/>
            <person name="Duesterhoeft A."/>
            <person name="Fritzc C."/>
            <person name="Holzer E."/>
            <person name="Moestl D."/>
            <person name="Hilbert H."/>
            <person name="Borzym K."/>
            <person name="Langer I."/>
            <person name="Beck A."/>
            <person name="Lehrach H."/>
            <person name="Reinhardt R."/>
            <person name="Pohl T.M."/>
            <person name="Eger P."/>
            <person name="Zimmermann W."/>
            <person name="Wedler H."/>
            <person name="Wambutt R."/>
            <person name="Purnelle B."/>
            <person name="Goffeau A."/>
            <person name="Cadieu E."/>
            <person name="Dreano S."/>
            <person name="Gloux S."/>
            <person name="Lelaure V."/>
            <person name="Mottier S."/>
            <person name="Galibert F."/>
            <person name="Aves S.J."/>
            <person name="Xiang Z."/>
            <person name="Hunt C."/>
            <person name="Moore K."/>
            <person name="Hurst S.M."/>
            <person name="Lucas M."/>
            <person name="Rochet M."/>
            <person name="Gaillardin C."/>
            <person name="Tallada V.A."/>
            <person name="Garzon A."/>
            <person name="Thode G."/>
            <person name="Daga R.R."/>
            <person name="Cruzado L."/>
            <person name="Jimenez J."/>
            <person name="Sanchez M."/>
            <person name="del Rey F."/>
            <person name="Benito J."/>
            <person name="Dominguez A."/>
            <person name="Revuelta J.L."/>
            <person name="Moreno S."/>
            <person name="Armstrong J."/>
            <person name="Forsburg S.L."/>
            <person name="Cerutti L."/>
            <person name="Lowe T."/>
            <person name="McCombie W.R."/>
            <person name="Paulsen I."/>
            <person name="Potashkin J."/>
            <person name="Shpakovski G.V."/>
            <person name="Ussery D."/>
            <person name="Barrell B.G."/>
            <person name="Nurse P."/>
        </authorList>
    </citation>
    <scope>NUCLEOTIDE SEQUENCE [LARGE SCALE GENOMIC DNA]</scope>
    <source>
        <strain>972 / ATCC 24843</strain>
    </source>
</reference>
<accession>Q10072</accession>
<keyword id="KW-0472">Membrane</keyword>
<keyword id="KW-1185">Reference proteome</keyword>
<keyword id="KW-0812">Transmembrane</keyword>
<keyword id="KW-1133">Transmembrane helix</keyword>
<evidence type="ECO:0000255" key="1"/>
<evidence type="ECO:0000305" key="2"/>
<feature type="chain" id="PRO_0000173430" description="Uncharacterized transporter C3H1.06c">
    <location>
        <begin position="1"/>
        <end position="589"/>
    </location>
</feature>
<feature type="transmembrane region" description="Helical" evidence="1">
    <location>
        <begin position="90"/>
        <end position="110"/>
    </location>
</feature>
<feature type="transmembrane region" description="Helical" evidence="1">
    <location>
        <begin position="128"/>
        <end position="148"/>
    </location>
</feature>
<feature type="transmembrane region" description="Helical" evidence="1">
    <location>
        <begin position="162"/>
        <end position="182"/>
    </location>
</feature>
<feature type="transmembrane region" description="Helical" evidence="1">
    <location>
        <begin position="189"/>
        <end position="209"/>
    </location>
</feature>
<feature type="transmembrane region" description="Helical" evidence="1">
    <location>
        <begin position="217"/>
        <end position="237"/>
    </location>
</feature>
<feature type="transmembrane region" description="Helical" evidence="1">
    <location>
        <begin position="245"/>
        <end position="265"/>
    </location>
</feature>
<feature type="transmembrane region" description="Helical" evidence="1">
    <location>
        <begin position="284"/>
        <end position="304"/>
    </location>
</feature>
<feature type="transmembrane region" description="Helical" evidence="1">
    <location>
        <begin position="311"/>
        <end position="331"/>
    </location>
</feature>
<feature type="transmembrane region" description="Helical" evidence="1">
    <location>
        <begin position="355"/>
        <end position="375"/>
    </location>
</feature>
<feature type="transmembrane region" description="Helical" evidence="1">
    <location>
        <begin position="390"/>
        <end position="410"/>
    </location>
</feature>
<feature type="transmembrane region" description="Helical" evidence="1">
    <location>
        <begin position="419"/>
        <end position="439"/>
    </location>
</feature>
<feature type="transmembrane region" description="Helical" evidence="1">
    <location>
        <begin position="448"/>
        <end position="468"/>
    </location>
</feature>
<feature type="transmembrane region" description="Helical" evidence="1">
    <location>
        <begin position="483"/>
        <end position="503"/>
    </location>
</feature>
<feature type="transmembrane region" description="Helical" evidence="1">
    <location>
        <begin position="545"/>
        <end position="565"/>
    </location>
</feature>
<sequence>MNPSSSPNRSLNPTRGLNLYSTGNEVTWFSSTVDEVNELKPAKSKAFSISAQDQIYGTSSLKSRFSTHEASSEKDDSSDFTLVLPSNRMYIVIPGLMLSIFLSALDQTVITTAIPTIVANLDGGSSYSWIGTAYTLAQTSILPFCGIMSEVVGRKIVLYTSIVLFLFGSAMCGAAQNMLWLVLCRAVQGIGGGGITSLVTIVIADITPLQTRPYYTGCMGVTWGLASVMGPLIGGAISQKASWRWIFFINLPTGGLSLALLIFFLNLVPKPTVSFRVFLRDFDFVGIITITTGVVLFLVGLNIGSTTGHWAHANVLCYLIFGILCIAGFVVNEFYTTRTRIITPSAFKTLSLTSVMVTSFLHYYIVSTITYYIPVYFQNIKGDGPLMSGVHTLSLAVVSSLLSAVSGMGIGKLKNYRYPMIGGWIVLLAGTGSMIAIYYNTDISRTMGFLALTAVGTGNLFQPNLIAVQASVPPALIATSCSAFMLLRNMGASVGISMGAVIYDQQLTTLLKGTKYSAGLSYSQIASIPNVSEKNFVFNAYANAIRMIWIVNCPVAGVGMLLSFFTKQEKLSQSVTEYKEKDKGFKDAP</sequence>
<name>YAN6_SCHPO</name>
<comment type="subcellular location">
    <subcellularLocation>
        <location evidence="2">Membrane</location>
        <topology evidence="2">Multi-pass membrane protein</topology>
    </subcellularLocation>
</comment>
<comment type="similarity">
    <text evidence="2">Belongs to the major facilitator superfamily. TCR/Tet family.</text>
</comment>